<feature type="chain" id="PRO_0000455125" description="Putative RNA-binding regulatory peptide">
    <location>
        <begin position="1"/>
        <end position="71"/>
    </location>
</feature>
<feature type="mutagenesis site" description="Abolishes binding to IGF2BP1 and does not increase binding of IGF2BP1 to m6A-containing RNAs or to RNA stabilizers ELAVL1/HUR, MATR3 or PABPC1." evidence="1">
    <original>G</original>
    <variation>A</variation>
    <location>
        <position position="19"/>
    </location>
</feature>
<feature type="mutagenesis site" description="No effect on binding to IGF2BP1." evidence="1">
    <original>G</original>
    <variation>A</variation>
    <location>
        <position position="63"/>
    </location>
</feature>
<organism>
    <name type="scientific">Homo sapiens</name>
    <name type="common">Human</name>
    <dbReference type="NCBI Taxonomy" id="9606"/>
    <lineage>
        <taxon>Eukaryota</taxon>
        <taxon>Metazoa</taxon>
        <taxon>Chordata</taxon>
        <taxon>Craniata</taxon>
        <taxon>Vertebrata</taxon>
        <taxon>Euteleostomi</taxon>
        <taxon>Mammalia</taxon>
        <taxon>Eutheria</taxon>
        <taxon>Euarchontoglires</taxon>
        <taxon>Primates</taxon>
        <taxon>Haplorrhini</taxon>
        <taxon>Catarrhini</taxon>
        <taxon>Hominidae</taxon>
        <taxon>Homo</taxon>
    </lineage>
</organism>
<keyword id="KW-1185">Reference proteome</keyword>
<evidence type="ECO:0000269" key="1">
    <source>
    </source>
</evidence>
<evidence type="ECO:0000303" key="2">
    <source>
    </source>
</evidence>
<evidence type="ECO:0000305" key="3"/>
<evidence type="ECO:0000312" key="4">
    <source>
        <dbReference type="HGNC" id="HGNC:51706"/>
    </source>
</evidence>
<dbReference type="EMBL" id="AL137028">
    <property type="status" value="NOT_ANNOTATED_CDS"/>
    <property type="molecule type" value="Genomic_DNA"/>
</dbReference>
<dbReference type="EMBL" id="BC118988">
    <property type="protein sequence ID" value="AAI18989.1"/>
    <property type="molecule type" value="mRNA"/>
</dbReference>
<dbReference type="EMBL" id="BC122537">
    <property type="protein sequence ID" value="AAI22538.1"/>
    <property type="molecule type" value="mRNA"/>
</dbReference>
<dbReference type="SMR" id="C0HM01"/>
<dbReference type="FunCoup" id="C0HM01">
    <property type="interactions" value="1"/>
</dbReference>
<dbReference type="IntAct" id="C0HM01">
    <property type="interactions" value="3"/>
</dbReference>
<dbReference type="PeptideAtlas" id="C0HM01"/>
<dbReference type="AGR" id="HGNC:51706"/>
<dbReference type="GeneCards" id="SEPTIN14P20"/>
<dbReference type="HGNC" id="HGNC:51706">
    <property type="gene designation" value="SEPTIN14P20"/>
</dbReference>
<dbReference type="Proteomes" id="UP000005640">
    <property type="component" value="Unplaced"/>
</dbReference>
<dbReference type="GO" id="GO:0048255">
    <property type="term" value="P:mRNA stabilization"/>
    <property type="evidence" value="ECO:0000314"/>
    <property type="project" value="UniProtKB"/>
</dbReference>
<dbReference type="GO" id="GO:1902416">
    <property type="term" value="P:positive regulation of mRNA binding"/>
    <property type="evidence" value="ECO:0000314"/>
    <property type="project" value="UniProtKB"/>
</dbReference>
<reference evidence="3" key="1">
    <citation type="journal article" date="2001" name="Nature">
        <title>The DNA sequence and comparative analysis of human chromosome 20.</title>
        <authorList>
            <person name="Deloukas P."/>
            <person name="Matthews L.H."/>
            <person name="Ashurst J.L."/>
            <person name="Burton J."/>
            <person name="Gilbert J.G.R."/>
            <person name="Jones M."/>
            <person name="Stavrides G."/>
            <person name="Almeida J.P."/>
            <person name="Babbage A.K."/>
            <person name="Bagguley C.L."/>
            <person name="Bailey J."/>
            <person name="Barlow K.F."/>
            <person name="Bates K.N."/>
            <person name="Beard L.M."/>
            <person name="Beare D.M."/>
            <person name="Beasley O.P."/>
            <person name="Bird C.P."/>
            <person name="Blakey S.E."/>
            <person name="Bridgeman A.M."/>
            <person name="Brown A.J."/>
            <person name="Buck D."/>
            <person name="Burrill W.D."/>
            <person name="Butler A.P."/>
            <person name="Carder C."/>
            <person name="Carter N.P."/>
            <person name="Chapman J.C."/>
            <person name="Clamp M."/>
            <person name="Clark G."/>
            <person name="Clark L.N."/>
            <person name="Clark S.Y."/>
            <person name="Clee C.M."/>
            <person name="Clegg S."/>
            <person name="Cobley V.E."/>
            <person name="Collier R.E."/>
            <person name="Connor R.E."/>
            <person name="Corby N.R."/>
            <person name="Coulson A."/>
            <person name="Coville G.J."/>
            <person name="Deadman R."/>
            <person name="Dhami P.D."/>
            <person name="Dunn M."/>
            <person name="Ellington A.G."/>
            <person name="Frankland J.A."/>
            <person name="Fraser A."/>
            <person name="French L."/>
            <person name="Garner P."/>
            <person name="Grafham D.V."/>
            <person name="Griffiths C."/>
            <person name="Griffiths M.N.D."/>
            <person name="Gwilliam R."/>
            <person name="Hall R.E."/>
            <person name="Hammond S."/>
            <person name="Harley J.L."/>
            <person name="Heath P.D."/>
            <person name="Ho S."/>
            <person name="Holden J.L."/>
            <person name="Howden P.J."/>
            <person name="Huckle E."/>
            <person name="Hunt A.R."/>
            <person name="Hunt S.E."/>
            <person name="Jekosch K."/>
            <person name="Johnson C.M."/>
            <person name="Johnson D."/>
            <person name="Kay M.P."/>
            <person name="Kimberley A.M."/>
            <person name="King A."/>
            <person name="Knights A."/>
            <person name="Laird G.K."/>
            <person name="Lawlor S."/>
            <person name="Lehvaeslaiho M.H."/>
            <person name="Leversha M.A."/>
            <person name="Lloyd C."/>
            <person name="Lloyd D.M."/>
            <person name="Lovell J.D."/>
            <person name="Marsh V.L."/>
            <person name="Martin S.L."/>
            <person name="McConnachie L.J."/>
            <person name="McLay K."/>
            <person name="McMurray A.A."/>
            <person name="Milne S.A."/>
            <person name="Mistry D."/>
            <person name="Moore M.J.F."/>
            <person name="Mullikin J.C."/>
            <person name="Nickerson T."/>
            <person name="Oliver K."/>
            <person name="Parker A."/>
            <person name="Patel R."/>
            <person name="Pearce T.A.V."/>
            <person name="Peck A.I."/>
            <person name="Phillimore B.J.C.T."/>
            <person name="Prathalingam S.R."/>
            <person name="Plumb R.W."/>
            <person name="Ramsay H."/>
            <person name="Rice C.M."/>
            <person name="Ross M.T."/>
            <person name="Scott C.E."/>
            <person name="Sehra H.K."/>
            <person name="Shownkeen R."/>
            <person name="Sims S."/>
            <person name="Skuce C.D."/>
            <person name="Smith M.L."/>
            <person name="Soderlund C."/>
            <person name="Steward C.A."/>
            <person name="Sulston J.E."/>
            <person name="Swann R.M."/>
            <person name="Sycamore N."/>
            <person name="Taylor R."/>
            <person name="Tee L."/>
            <person name="Thomas D.W."/>
            <person name="Thorpe A."/>
            <person name="Tracey A."/>
            <person name="Tromans A.C."/>
            <person name="Vaudin M."/>
            <person name="Wall M."/>
            <person name="Wallis J.M."/>
            <person name="Whitehead S.L."/>
            <person name="Whittaker P."/>
            <person name="Willey D.L."/>
            <person name="Williams L."/>
            <person name="Williams S.A."/>
            <person name="Wilming L."/>
            <person name="Wray P.W."/>
            <person name="Hubbard T."/>
            <person name="Durbin R.M."/>
            <person name="Bentley D.R."/>
            <person name="Beck S."/>
            <person name="Rogers J."/>
        </authorList>
    </citation>
    <scope>NUCLEOTIDE SEQUENCE [LARGE SCALE GENOMIC DNA]</scope>
</reference>
<reference evidence="3" key="2">
    <citation type="journal article" date="2004" name="Genome Res.">
        <title>The status, quality, and expansion of the NIH full-length cDNA project: the Mammalian Gene Collection (MGC).</title>
        <authorList>
            <consortium name="The MGC Project Team"/>
        </authorList>
    </citation>
    <scope>NUCLEOTIDE SEQUENCE [LARGE SCALE MRNA]</scope>
</reference>
<reference evidence="3" key="3">
    <citation type="journal article" date="2020" name="Nat. Commun.">
        <title>An oncopeptide regulates m6A recognition by the m6A reader IGF2BP1 and tumorigenesis.</title>
        <authorList>
            <person name="Zhu S."/>
            <person name="Wang J.Z."/>
            <person name="Chen D."/>
            <person name="He Y.T."/>
            <person name="Meng N."/>
            <person name="Chen M."/>
            <person name="Lu R.X."/>
            <person name="Chen X.H."/>
            <person name="Zhang X.L."/>
            <person name="Yan G.R."/>
        </authorList>
    </citation>
    <scope>IDENTIFICATION BY MASS SPECTROMETRY</scope>
    <scope>FUNCTION</scope>
    <scope>INTERACTION WITH IGF2BP1</scope>
    <scope>TISSUE SPECIFICITY</scope>
    <scope>MUTAGENESIS OF GLY-19 AND GLY-63</scope>
</reference>
<name>RBRP_HUMAN</name>
<gene>
    <name evidence="4" type="primary">SEPTIN14P20</name>
    <name evidence="4" type="synonym">C20orf69</name>
    <name evidence="2" type="synonym">LINC00266-1</name>
</gene>
<accession>C0HM01</accession>
<sequence>MIQQEEIRKLEEEKKQLEGEIIDFYKMKAASEALQTQLSTDTKKDKHPDPYEFLLLRKIKHPGFNEELSPC</sequence>
<comment type="function">
    <text evidence="1">Enhances binding of IGF2BP1 to N6-methyladenosine (m6A)-containing mRNAs, thereby contributing to increased mRNA stability (PubMed:32245947). Also increases the interaction of IGF2BP1 with RNA stabilizers ELAVL1/HUR, MATR3 and PABPC1, and increases the interaction of RNA stabilizers ELAVL1/HUR, MATR3 and PABPC1 with m6A-containing mRNAs (PubMed:32245947). Contributes to MYC stability by enhancing binding of IGF2BP1 to m6A-containing MYC mRNAs and increasing recruitment of RNA stabilizing proteins to m6A-containing MYC mRNAs (PubMed:32245947).</text>
</comment>
<comment type="subunit">
    <text evidence="1">Interacts with IGF2BP1 (via KH3 and KH4 domains); the interaction results in increased binding of IGF2BP1 to N6-methyladenosine (m6A)-containing mRNAs.</text>
</comment>
<comment type="tissue specificity">
    <text evidence="1">Detected in colon (at protein level).</text>
</comment>
<comment type="miscellaneous">
    <text evidence="1">Promotes colon cancer cell growth, colony formation, migration and invasion through enhanced stability of MYC (PubMed:32245947). Expressed in colorectal, breast, ovarian and nasopharyngeal cancer cells (PubMed:32245947). Higher levels are found in colon cancer cells than in adjacent nontumor tissue (PubMed:32245947).</text>
</comment>
<comment type="caution">
    <text evidence="3">Could be the product of a pseudogene.</text>
</comment>
<protein>
    <recommendedName>
        <fullName evidence="3">Putative RNA-binding regulatory peptide</fullName>
        <shortName evidence="2">RBRP</shortName>
    </recommendedName>
    <alternativeName>
        <fullName evidence="4">Septin 14 pseudogene 20</fullName>
    </alternativeName>
</protein>
<proteinExistence type="uncertain"/>